<sequence length="750" mass="82311">MAQEEMEVDLLNLLNPMYSNRDVSTSHQPRGSGQVLFLPPPLTYSDDSEDLFLGPTEPHDVIVLDSVEEAPGQVAAPTNALQMLHSALEQLRQAAEQRSSVRPTRVQRRSTRRHQRGGSQRTAGTSSRAALSNFFQINRTQGVAPTSEREERNAALRTESSRTSPGDSSDETVELSEEEEGGGGSSTDVDEVDINAGAAPPAEPAPEELQINVIEVQAEAPESLPVPESVTLPLQIQKKQKTPVKQLSPVKHLPPEEDEGDTCAICFEPWTNAGQHRLSALRCGHLFGFTCIERWLKGGAAKCPQCNKKAKRADIVVLYARTLKALDTSEQERMKSSLEMEQSMRRKAELESAQCRLQVQVLTDECGKLRKQIQELKMLIAQHGTSTSMQASSSRSTISGSLSSSQGQHKYSFEKAILISQTGSCRVMSYCESMSCLVVSQPSPQTTLIPGCGIKKLSAANLKSSQYVPIHSKQIRGLAFSNRSDGLLLSAALDNTIKLTSLMTNTVVQTYNTGRPVWSCCWCSDNSNYVYAGLINGSVLVYDLRDTSNCVQELVPLGSRCPVVSLSYVPRAASEVFPCGGVLVGTLEGACFWEMKDDQYRPHVLPLEPGGCTDIQIESNTRHCLVTYRPGKNHNYVRGVMMELTSNRLNDSEDEYSCSCYPVQTFNAGNTCKLLTKNAIFQSPERDGTILVCAGDEASNSAMLWHSGNGTLLQKLQADQPVLDICPMEVNQSSMLATLTEKMIKIYKWE</sequence>
<evidence type="ECO:0000250" key="1">
    <source>
        <dbReference type="UniProtKB" id="Q6PCD5"/>
    </source>
</evidence>
<evidence type="ECO:0000250" key="2">
    <source>
        <dbReference type="UniProtKB" id="Q9BX63"/>
    </source>
</evidence>
<evidence type="ECO:0000255" key="3"/>
<evidence type="ECO:0000255" key="4">
    <source>
        <dbReference type="PROSITE-ProRule" id="PRU00175"/>
    </source>
</evidence>
<evidence type="ECO:0000256" key="5">
    <source>
        <dbReference type="SAM" id="MobiDB-lite"/>
    </source>
</evidence>
<evidence type="ECO:0000269" key="6">
    <source>
    </source>
</evidence>
<evidence type="ECO:0000305" key="7">
    <source>
    </source>
</evidence>
<feature type="chain" id="PRO_0000459742" description="E3 ubiquitin-protein ligase rfwd3.S">
    <location>
        <begin position="1"/>
        <end position="750"/>
    </location>
</feature>
<feature type="repeat" description="WD 1" evidence="3">
    <location>
        <begin position="470"/>
        <end position="510"/>
    </location>
</feature>
<feature type="repeat" description="WD 2" evidence="3">
    <location>
        <begin position="512"/>
        <end position="552"/>
    </location>
</feature>
<feature type="repeat" description="WD 3" evidence="3">
    <location>
        <begin position="558"/>
        <end position="603"/>
    </location>
</feature>
<feature type="zinc finger region" description="RING-type; degenerate" evidence="4">
    <location>
        <begin position="263"/>
        <end position="307"/>
    </location>
</feature>
<feature type="region of interest" description="Disordered" evidence="5">
    <location>
        <begin position="92"/>
        <end position="206"/>
    </location>
</feature>
<feature type="region of interest" description="Disordered" evidence="5">
    <location>
        <begin position="387"/>
        <end position="406"/>
    </location>
</feature>
<feature type="compositionally biased region" description="Basic residues" evidence="5">
    <location>
        <begin position="105"/>
        <end position="116"/>
    </location>
</feature>
<feature type="compositionally biased region" description="Polar residues" evidence="5">
    <location>
        <begin position="122"/>
        <end position="144"/>
    </location>
</feature>
<feature type="compositionally biased region" description="Acidic residues" evidence="5">
    <location>
        <begin position="168"/>
        <end position="181"/>
    </location>
</feature>
<feature type="compositionally biased region" description="Low complexity" evidence="5">
    <location>
        <begin position="387"/>
        <end position="405"/>
    </location>
</feature>
<reference key="1">
    <citation type="journal article" date="2016" name="Nature">
        <title>Genome evolution in the allotetraploid frog Xenopus laevis.</title>
        <authorList>
            <person name="Session A.M."/>
            <person name="Uno Y."/>
            <person name="Kwon T."/>
            <person name="Chapman J.A."/>
            <person name="Toyoda A."/>
            <person name="Takahashi S."/>
            <person name="Fukui A."/>
            <person name="Hikosaka A."/>
            <person name="Suzuki A."/>
            <person name="Kondo M."/>
            <person name="van Heeringen S.J."/>
            <person name="Quigley I."/>
            <person name="Heinz S."/>
            <person name="Ogino H."/>
            <person name="Ochi H."/>
            <person name="Hellsten U."/>
            <person name="Lyons J.B."/>
            <person name="Simakov O."/>
            <person name="Putnam N."/>
            <person name="Stites J."/>
            <person name="Kuroki Y."/>
            <person name="Tanaka T."/>
            <person name="Michiue T."/>
            <person name="Watanabe M."/>
            <person name="Bogdanovic O."/>
            <person name="Lister R."/>
            <person name="Georgiou G."/>
            <person name="Paranjpe S.S."/>
            <person name="van Kruijsbergen I."/>
            <person name="Shu S."/>
            <person name="Carlson J."/>
            <person name="Kinoshita T."/>
            <person name="Ohta Y."/>
            <person name="Mawaribuchi S."/>
            <person name="Jenkins J."/>
            <person name="Grimwood J."/>
            <person name="Schmutz J."/>
            <person name="Mitros T."/>
            <person name="Mozaffari S.V."/>
            <person name="Suzuki Y."/>
            <person name="Haramoto Y."/>
            <person name="Yamamoto T.S."/>
            <person name="Takagi C."/>
            <person name="Heald R."/>
            <person name="Miller K."/>
            <person name="Haudenschild C."/>
            <person name="Kitzman J."/>
            <person name="Nakayama T."/>
            <person name="Izutsu Y."/>
            <person name="Robert J."/>
            <person name="Fortriede J."/>
            <person name="Burns K."/>
            <person name="Lotay V."/>
            <person name="Karimi K."/>
            <person name="Yasuoka Y."/>
            <person name="Dichmann D.S."/>
            <person name="Flajnik M.F."/>
            <person name="Houston D.W."/>
            <person name="Shendure J."/>
            <person name="DuPasquier L."/>
            <person name="Vize P.D."/>
            <person name="Zorn A.M."/>
            <person name="Ito M."/>
            <person name="Marcotte E.M."/>
            <person name="Wallingford J.B."/>
            <person name="Ito Y."/>
            <person name="Asashima M."/>
            <person name="Ueno N."/>
            <person name="Matsuda Y."/>
            <person name="Veenstra G.J."/>
            <person name="Fujiyama A."/>
            <person name="Harland R.M."/>
            <person name="Taira M."/>
            <person name="Rokhsar D.S."/>
        </authorList>
    </citation>
    <scope>NUCLEOTIDE SEQUENCE [LARGE SCALE GENOMIC DNA]</scope>
    <source>
        <strain>J</strain>
    </source>
</reference>
<reference key="2">
    <citation type="journal article" date="2021" name="Mol. Cell">
        <title>The ubiquitin ligase RFWD3 is required for translesion DNA synthesis.</title>
        <authorList>
            <person name="Gallina I."/>
            <person name="Hendriks I.A."/>
            <person name="Hoffmann S."/>
            <person name="Larsen N.B."/>
            <person name="Johansen J."/>
            <person name="Colding-Christensen C.S."/>
            <person name="Schubert L."/>
            <person name="Selles-Baiget S."/>
            <person name="Fabian Z."/>
            <person name="Kuehbacher U."/>
            <person name="Gao A.O."/>
            <person name="Raeschle M."/>
            <person name="Rasmussen S."/>
            <person name="Nielsen M.L."/>
            <person name="Mailand N."/>
            <person name="Duxin J.P."/>
        </authorList>
    </citation>
    <scope>FUNCTION</scope>
    <scope>CATALYTIC ACTIVITY</scope>
    <scope>PATHWAY</scope>
</reference>
<comment type="function">
    <text evidence="1 6">E3 ubiquitin-protein ligase required for the repair of DNA interstrand cross-links (ICL) in response to DNA damage (By similarity). Plays a key role in RPA-mediated DNA damage signaling and repair (By similarity). Required to translesion DNA synthesis across DNA-protein cross-link adducts by catalyzing ubiquitination of proteins on single-stranded DNA (ssDNA) (PubMed:33321094). Mediates ubiquitination of the hmces DNA-protein cross-link, possibly promoting its degradation (PubMed:33321094).</text>
</comment>
<comment type="catalytic activity">
    <reaction evidence="7">
        <text>S-ubiquitinyl-[E2 ubiquitin-conjugating enzyme]-L-cysteine + [acceptor protein]-L-lysine = [E2 ubiquitin-conjugating enzyme]-L-cysteine + N(6)-ubiquitinyl-[acceptor protein]-L-lysine.</text>
        <dbReference type="EC" id="2.3.2.27"/>
    </reaction>
</comment>
<comment type="cofactor">
    <cofactor evidence="2">
        <name>[4Fe-4S] cluster</name>
        <dbReference type="ChEBI" id="CHEBI:49883"/>
    </cofactor>
    <text evidence="2">Binds 1 [4Fe-4S] cluster.</text>
</comment>
<comment type="pathway">
    <text evidence="6">Protein modification; protein ubiquitination.</text>
</comment>
<comment type="subcellular location">
    <subcellularLocation>
        <location evidence="1">Nucleus</location>
    </subcellularLocation>
    <subcellularLocation>
        <location evidence="1">Nucleus</location>
        <location evidence="1">PML body</location>
    </subcellularLocation>
    <subcellularLocation>
        <location evidence="1">Cytoplasm</location>
    </subcellularLocation>
    <text evidence="1">In undamaged cells, found both in the cytoplasm and in the nucleus, partially associated with PML nuclear bodies. In response to replication block, such as that caused by hydroxyurea treatment, or to DNA damage caused by ionizing radiations or doxorubicin, recruited to the nucleus, to stalled replication forks or to sites of DNA repair.</text>
</comment>
<organism>
    <name type="scientific">Xenopus laevis</name>
    <name type="common">African clawed frog</name>
    <dbReference type="NCBI Taxonomy" id="8355"/>
    <lineage>
        <taxon>Eukaryota</taxon>
        <taxon>Metazoa</taxon>
        <taxon>Chordata</taxon>
        <taxon>Craniata</taxon>
        <taxon>Vertebrata</taxon>
        <taxon>Euteleostomi</taxon>
        <taxon>Amphibia</taxon>
        <taxon>Batrachia</taxon>
        <taxon>Anura</taxon>
        <taxon>Pipoidea</taxon>
        <taxon>Pipidae</taxon>
        <taxon>Xenopodinae</taxon>
        <taxon>Xenopus</taxon>
        <taxon>Xenopus</taxon>
    </lineage>
</organism>
<protein>
    <recommendedName>
        <fullName>E3 ubiquitin-protein ligase rfwd3.S</fullName>
        <ecNumber evidence="7">2.3.2.27</ecNumber>
    </recommendedName>
    <alternativeName>
        <fullName>RING finger and WD repeat domain-containing protein 3.S</fullName>
    </alternativeName>
</protein>
<accession>A0A974CYQ5</accession>
<accession>A0A1L8GF42</accession>
<proteinExistence type="evidence at protein level"/>
<name>RFW3S_XENLA</name>
<keyword id="KW-0963">Cytoplasm</keyword>
<keyword id="KW-0227">DNA damage</keyword>
<keyword id="KW-0234">DNA repair</keyword>
<keyword id="KW-0479">Metal-binding</keyword>
<keyword id="KW-0539">Nucleus</keyword>
<keyword id="KW-1185">Reference proteome</keyword>
<keyword id="KW-0677">Repeat</keyword>
<keyword id="KW-0808">Transferase</keyword>
<keyword id="KW-0833">Ubl conjugation pathway</keyword>
<keyword id="KW-0853">WD repeat</keyword>
<keyword id="KW-0862">Zinc</keyword>
<keyword id="KW-0863">Zinc-finger</keyword>
<dbReference type="EC" id="2.3.2.27" evidence="7"/>
<dbReference type="EMBL" id="CM004473">
    <property type="protein sequence ID" value="OCT82479.1"/>
    <property type="molecule type" value="Genomic_DNA"/>
</dbReference>
<dbReference type="RefSeq" id="XP_018116138.1">
    <property type="nucleotide sequence ID" value="XM_018260649.2"/>
</dbReference>
<dbReference type="SMR" id="A0A974CYQ5"/>
<dbReference type="PaxDb" id="8355-A0A1L8GF42"/>
<dbReference type="GeneID" id="108715474"/>
<dbReference type="KEGG" id="xla:108715474"/>
<dbReference type="AGR" id="Xenbase:XB-GENE-6486399"/>
<dbReference type="CTD" id="108715474"/>
<dbReference type="Xenbase" id="XB-GENE-6486399">
    <property type="gene designation" value="rfwd3.S"/>
</dbReference>
<dbReference type="OMA" id="CLESWEM"/>
<dbReference type="OrthoDB" id="5600418at2759"/>
<dbReference type="UniPathway" id="UPA00143"/>
<dbReference type="Proteomes" id="UP000186698">
    <property type="component" value="Chromosome 4S"/>
</dbReference>
<dbReference type="Proteomes" id="UP000694892">
    <property type="component" value="Chromosome 4S"/>
</dbReference>
<dbReference type="Bgee" id="108715474">
    <property type="expression patterns" value="Expressed in egg cell and 19 other cell types or tissues"/>
</dbReference>
<dbReference type="GO" id="GO:0005737">
    <property type="term" value="C:cytoplasm"/>
    <property type="evidence" value="ECO:0007669"/>
    <property type="project" value="UniProtKB-SubCell"/>
</dbReference>
<dbReference type="GO" id="GO:0016605">
    <property type="term" value="C:PML body"/>
    <property type="evidence" value="ECO:0007669"/>
    <property type="project" value="UniProtKB-SubCell"/>
</dbReference>
<dbReference type="GO" id="GO:0061630">
    <property type="term" value="F:ubiquitin protein ligase activity"/>
    <property type="evidence" value="ECO:0000314"/>
    <property type="project" value="UniProtKB"/>
</dbReference>
<dbReference type="GO" id="GO:0008270">
    <property type="term" value="F:zinc ion binding"/>
    <property type="evidence" value="ECO:0007669"/>
    <property type="project" value="UniProtKB-KW"/>
</dbReference>
<dbReference type="GO" id="GO:0036297">
    <property type="term" value="P:interstrand cross-link repair"/>
    <property type="evidence" value="ECO:0000314"/>
    <property type="project" value="UniProtKB"/>
</dbReference>
<dbReference type="GO" id="GO:0016567">
    <property type="term" value="P:protein ubiquitination"/>
    <property type="evidence" value="ECO:0007669"/>
    <property type="project" value="UniProtKB-UniPathway"/>
</dbReference>
<dbReference type="CDD" id="cd16450">
    <property type="entry name" value="mRING-C3HGC3_RFWD3"/>
    <property type="match status" value="1"/>
</dbReference>
<dbReference type="Gene3D" id="2.130.10.10">
    <property type="entry name" value="YVTN repeat-like/Quinoprotein amine dehydrogenase"/>
    <property type="match status" value="1"/>
</dbReference>
<dbReference type="Gene3D" id="3.30.40.10">
    <property type="entry name" value="Zinc/RING finger domain, C3HC4 (zinc finger)"/>
    <property type="match status" value="1"/>
</dbReference>
<dbReference type="InterPro" id="IPR037381">
    <property type="entry name" value="RFWD3"/>
</dbReference>
<dbReference type="InterPro" id="IPR015943">
    <property type="entry name" value="WD40/YVTN_repeat-like_dom_sf"/>
</dbReference>
<dbReference type="InterPro" id="IPR036322">
    <property type="entry name" value="WD40_repeat_dom_sf"/>
</dbReference>
<dbReference type="InterPro" id="IPR056527">
    <property type="entry name" value="WD40_RFWD3"/>
</dbReference>
<dbReference type="InterPro" id="IPR001680">
    <property type="entry name" value="WD40_rpt"/>
</dbReference>
<dbReference type="InterPro" id="IPR001841">
    <property type="entry name" value="Znf_RING"/>
</dbReference>
<dbReference type="InterPro" id="IPR013083">
    <property type="entry name" value="Znf_RING/FYVE/PHD"/>
</dbReference>
<dbReference type="PANTHER" id="PTHR16047:SF7">
    <property type="entry name" value="E3 UBIQUITIN-PROTEIN LIGASE RFWD3"/>
    <property type="match status" value="1"/>
</dbReference>
<dbReference type="PANTHER" id="PTHR16047">
    <property type="entry name" value="RFWD3 PROTEIN"/>
    <property type="match status" value="1"/>
</dbReference>
<dbReference type="Pfam" id="PF23419">
    <property type="entry name" value="WD40_RFWD3"/>
    <property type="match status" value="1"/>
</dbReference>
<dbReference type="Pfam" id="PF13639">
    <property type="entry name" value="zf-RING_2"/>
    <property type="match status" value="1"/>
</dbReference>
<dbReference type="SMART" id="SM00184">
    <property type="entry name" value="RING"/>
    <property type="match status" value="1"/>
</dbReference>
<dbReference type="SMART" id="SM00320">
    <property type="entry name" value="WD40"/>
    <property type="match status" value="3"/>
</dbReference>
<dbReference type="SUPFAM" id="SSF57850">
    <property type="entry name" value="RING/U-box"/>
    <property type="match status" value="1"/>
</dbReference>
<dbReference type="SUPFAM" id="SSF50978">
    <property type="entry name" value="WD40 repeat-like"/>
    <property type="match status" value="1"/>
</dbReference>
<dbReference type="PROSITE" id="PS50089">
    <property type="entry name" value="ZF_RING_2"/>
    <property type="match status" value="1"/>
</dbReference>
<gene>
    <name type="primary">rfwd3.S</name>
    <name type="ORF">XELAEV_18025010mg</name>
</gene>